<accession>O64781</accession>
<comment type="catalytic activity">
    <reaction>
        <text>L-seryl-[protein] + ATP = O-phospho-L-seryl-[protein] + ADP + H(+)</text>
        <dbReference type="Rhea" id="RHEA:17989"/>
        <dbReference type="Rhea" id="RHEA-COMP:9863"/>
        <dbReference type="Rhea" id="RHEA-COMP:11604"/>
        <dbReference type="ChEBI" id="CHEBI:15378"/>
        <dbReference type="ChEBI" id="CHEBI:29999"/>
        <dbReference type="ChEBI" id="CHEBI:30616"/>
        <dbReference type="ChEBI" id="CHEBI:83421"/>
        <dbReference type="ChEBI" id="CHEBI:456216"/>
        <dbReference type="EC" id="2.7.11.1"/>
    </reaction>
</comment>
<comment type="catalytic activity">
    <reaction>
        <text>L-threonyl-[protein] + ATP = O-phospho-L-threonyl-[protein] + ADP + H(+)</text>
        <dbReference type="Rhea" id="RHEA:46608"/>
        <dbReference type="Rhea" id="RHEA-COMP:11060"/>
        <dbReference type="Rhea" id="RHEA-COMP:11605"/>
        <dbReference type="ChEBI" id="CHEBI:15378"/>
        <dbReference type="ChEBI" id="CHEBI:30013"/>
        <dbReference type="ChEBI" id="CHEBI:30616"/>
        <dbReference type="ChEBI" id="CHEBI:61977"/>
        <dbReference type="ChEBI" id="CHEBI:456216"/>
        <dbReference type="EC" id="2.7.11.1"/>
    </reaction>
</comment>
<comment type="subcellular location">
    <subcellularLocation>
        <location evidence="1">Cell membrane</location>
        <topology evidence="1">Single-pass type I membrane protein</topology>
    </subcellularLocation>
</comment>
<comment type="alternative products">
    <event type="alternative splicing"/>
    <isoform>
        <id>O64781-1</id>
        <name>1</name>
        <sequence type="displayed"/>
    </isoform>
    <isoform>
        <id>O64781-2</id>
        <name>2</name>
        <sequence type="described" ref="VSP_040156"/>
    </isoform>
</comment>
<comment type="similarity">
    <text evidence="5">Belongs to the protein kinase superfamily. Ser/Thr protein kinase family.</text>
</comment>
<feature type="signal peptide" evidence="3">
    <location>
        <begin position="1"/>
        <end position="42"/>
    </location>
</feature>
<feature type="chain" id="PRO_0000401320" description="G-type lectin S-receptor-like serine/threonine-protein kinase At1g61390">
    <location>
        <begin position="43"/>
        <end position="831"/>
    </location>
</feature>
<feature type="topological domain" description="Extracellular" evidence="3">
    <location>
        <begin position="43"/>
        <end position="448"/>
    </location>
</feature>
<feature type="transmembrane region" description="Helical" evidence="3">
    <location>
        <begin position="449"/>
        <end position="469"/>
    </location>
</feature>
<feature type="topological domain" description="Cytoplasmic" evidence="3">
    <location>
        <begin position="470"/>
        <end position="831"/>
    </location>
</feature>
<feature type="domain" description="Bulb-type lectin" evidence="4">
    <location>
        <begin position="43"/>
        <end position="162"/>
    </location>
</feature>
<feature type="domain" description="EGF-like; atypical">
    <location>
        <begin position="298"/>
        <end position="334"/>
    </location>
</feature>
<feature type="domain" description="PAN" evidence="6">
    <location>
        <begin position="353"/>
        <end position="439"/>
    </location>
</feature>
<feature type="domain" description="Protein kinase" evidence="5">
    <location>
        <begin position="520"/>
        <end position="803"/>
    </location>
</feature>
<feature type="region of interest" description="CaM-binding" evidence="1">
    <location>
        <begin position="609"/>
        <end position="626"/>
    </location>
</feature>
<feature type="active site" description="Proton acceptor" evidence="5 7">
    <location>
        <position position="645"/>
    </location>
</feature>
<feature type="binding site" evidence="5">
    <location>
        <begin position="526"/>
        <end position="534"/>
    </location>
    <ligand>
        <name>ATP</name>
        <dbReference type="ChEBI" id="CHEBI:30616"/>
    </ligand>
</feature>
<feature type="binding site" evidence="5">
    <location>
        <position position="548"/>
    </location>
    <ligand>
        <name>ATP</name>
        <dbReference type="ChEBI" id="CHEBI:30616"/>
    </ligand>
</feature>
<feature type="modified residue" description="Phosphoserine" evidence="2">
    <location>
        <position position="554"/>
    </location>
</feature>
<feature type="modified residue" description="Phosphoserine" evidence="2">
    <location>
        <position position="569"/>
    </location>
</feature>
<feature type="modified residue" description="Phosphoserine" evidence="2">
    <location>
        <position position="649"/>
    </location>
</feature>
<feature type="modified residue" description="Phosphoserine" evidence="2">
    <location>
        <position position="662"/>
    </location>
</feature>
<feature type="modified residue" description="Phosphothreonine" evidence="2">
    <location>
        <position position="679"/>
    </location>
</feature>
<feature type="modified residue" description="Phosphoserine" evidence="2">
    <location>
        <position position="722"/>
    </location>
</feature>
<feature type="modified residue" description="Phosphoserine" evidence="2">
    <location>
        <position position="814"/>
    </location>
</feature>
<feature type="glycosylation site" description="N-linked (GlcNAc...) asparagine" evidence="3">
    <location>
        <position position="45"/>
    </location>
</feature>
<feature type="glycosylation site" description="N-linked (GlcNAc...) asparagine" evidence="3">
    <location>
        <position position="71"/>
    </location>
</feature>
<feature type="glycosylation site" description="N-linked (GlcNAc...) asparagine" evidence="3">
    <location>
        <position position="106"/>
    </location>
</feature>
<feature type="glycosylation site" description="N-linked (GlcNAc...) asparagine" evidence="3">
    <location>
        <position position="112"/>
    </location>
</feature>
<feature type="glycosylation site" description="N-linked (GlcNAc...) asparagine" evidence="3">
    <location>
        <position position="340"/>
    </location>
</feature>
<feature type="glycosylation site" description="N-linked (GlcNAc...) asparagine" evidence="3">
    <location>
        <position position="356"/>
    </location>
</feature>
<feature type="glycosylation site" description="N-linked (GlcNAc...) asparagine" evidence="3">
    <location>
        <position position="399"/>
    </location>
</feature>
<feature type="glycosylation site" description="N-linked (GlcNAc...) asparagine" evidence="3">
    <location>
        <position position="446"/>
    </location>
</feature>
<feature type="disulfide bond" evidence="1">
    <location>
        <begin position="302"/>
        <end position="314"/>
    </location>
</feature>
<feature type="disulfide bond" evidence="1">
    <location>
        <begin position="308"/>
        <end position="322"/>
    </location>
</feature>
<feature type="disulfide bond" evidence="1">
    <location>
        <begin position="392"/>
        <end position="413"/>
    </location>
</feature>
<feature type="disulfide bond" evidence="1">
    <location>
        <begin position="396"/>
        <end position="402"/>
    </location>
</feature>
<feature type="splice variant" id="VSP_040156" description="In isoform 2." evidence="8">
    <location>
        <begin position="1"/>
        <end position="168"/>
    </location>
</feature>
<sequence length="831" mass="93048">MYKLPQRNCADKQEYTVHMRKMGMVIFACLLLLIIFPTFGYADINTSSPLSIGQTLSSPDGVYELGFFSPNNSRKQYVGIWFKNIAPQVVVWVANRDKPVTKTAANLTISSNGSLILLDGTQDVIWSTGEAFTSNKCHAELLDTGNLVVIDDVSGKTLWKSFENLGNTMLPQSSVMYDIPRGKNRVLTSWRSNSDPSPGEFTLEFTPQVPPQGLIRRGSSPYWRSGPWAKTRFSGIPGIDASYVSPFTVLQDVAKGTASFSYSMLRNYKLSYVTLTSEGKMKILWNDGKSWKLHFEAPTSSCDLYRACGPFGLCVRSRNPKCICLKGFVPKSDDEWKKGNWTSGCVRRTQLSCHTNSSTKTQGKETDSFYHMTRVKTPDLYQLAGFLNAEQCYQDCLGNCSCTAFAYISGIGCLVWNRELVDTVQFLSDGESLSLRLASSELAGSNRTKIILGTTVSLSIFVILVFAAYKSWRYRTKQNEPNPMFIHSSQDAWAKDMEPQDVSGVNLFDMHTIRTATNNFSSSNKLGQGGFGPVYKGKLVDGKEIAVKRLSSSSGQGTDEFMNEIRLISKLQHKNLVRLLGCCIKGEEKLLIYEYLVNKSLDVFLFDSTLKFEIDWQKRFNIIQGVARGLLYLHRDSRLRVIHRDLKVSNILLDEKMIPKISDFGLARMSQGTQYQDNTRRVVGTLGYMAPEYAWTGVFSEKSDIYSFGVLLLEIIIGEKISRFSEEGKTLLAYAWESWCETKGVDLLDQALADSSHPAEVGRCVQIGLLCVQHQPADRPNTLELMSMLTTISELPSPKQPTFTVHSRDDDSTSNDLITVNEITQSVIQGR</sequence>
<gene>
    <name type="ordered locus">At1g61390</name>
    <name type="ORF">T1F9.12</name>
</gene>
<keyword id="KW-0025">Alternative splicing</keyword>
<keyword id="KW-0067">ATP-binding</keyword>
<keyword id="KW-1003">Cell membrane</keyword>
<keyword id="KW-1015">Disulfide bond</keyword>
<keyword id="KW-0245">EGF-like domain</keyword>
<keyword id="KW-0325">Glycoprotein</keyword>
<keyword id="KW-0418">Kinase</keyword>
<keyword id="KW-0430">Lectin</keyword>
<keyword id="KW-0472">Membrane</keyword>
<keyword id="KW-0547">Nucleotide-binding</keyword>
<keyword id="KW-0597">Phosphoprotein</keyword>
<keyword id="KW-0675">Receptor</keyword>
<keyword id="KW-1185">Reference proteome</keyword>
<keyword id="KW-0723">Serine/threonine-protein kinase</keyword>
<keyword id="KW-0732">Signal</keyword>
<keyword id="KW-0808">Transferase</keyword>
<keyword id="KW-0812">Transmembrane</keyword>
<keyword id="KW-1133">Transmembrane helix</keyword>
<reference key="1">
    <citation type="journal article" date="2000" name="Nature">
        <title>Sequence and analysis of chromosome 1 of the plant Arabidopsis thaliana.</title>
        <authorList>
            <person name="Theologis A."/>
            <person name="Ecker J.R."/>
            <person name="Palm C.J."/>
            <person name="Federspiel N.A."/>
            <person name="Kaul S."/>
            <person name="White O."/>
            <person name="Alonso J."/>
            <person name="Altafi H."/>
            <person name="Araujo R."/>
            <person name="Bowman C.L."/>
            <person name="Brooks S.Y."/>
            <person name="Buehler E."/>
            <person name="Chan A."/>
            <person name="Chao Q."/>
            <person name="Chen H."/>
            <person name="Cheuk R.F."/>
            <person name="Chin C.W."/>
            <person name="Chung M.K."/>
            <person name="Conn L."/>
            <person name="Conway A.B."/>
            <person name="Conway A.R."/>
            <person name="Creasy T.H."/>
            <person name="Dewar K."/>
            <person name="Dunn P."/>
            <person name="Etgu P."/>
            <person name="Feldblyum T.V."/>
            <person name="Feng J.-D."/>
            <person name="Fong B."/>
            <person name="Fujii C.Y."/>
            <person name="Gill J.E."/>
            <person name="Goldsmith A.D."/>
            <person name="Haas B."/>
            <person name="Hansen N.F."/>
            <person name="Hughes B."/>
            <person name="Huizar L."/>
            <person name="Hunter J.L."/>
            <person name="Jenkins J."/>
            <person name="Johnson-Hopson C."/>
            <person name="Khan S."/>
            <person name="Khaykin E."/>
            <person name="Kim C.J."/>
            <person name="Koo H.L."/>
            <person name="Kremenetskaia I."/>
            <person name="Kurtz D.B."/>
            <person name="Kwan A."/>
            <person name="Lam B."/>
            <person name="Langin-Hooper S."/>
            <person name="Lee A."/>
            <person name="Lee J.M."/>
            <person name="Lenz C.A."/>
            <person name="Li J.H."/>
            <person name="Li Y.-P."/>
            <person name="Lin X."/>
            <person name="Liu S.X."/>
            <person name="Liu Z.A."/>
            <person name="Luros J.S."/>
            <person name="Maiti R."/>
            <person name="Marziali A."/>
            <person name="Militscher J."/>
            <person name="Miranda M."/>
            <person name="Nguyen M."/>
            <person name="Nierman W.C."/>
            <person name="Osborne B.I."/>
            <person name="Pai G."/>
            <person name="Peterson J."/>
            <person name="Pham P.K."/>
            <person name="Rizzo M."/>
            <person name="Rooney T."/>
            <person name="Rowley D."/>
            <person name="Sakano H."/>
            <person name="Salzberg S.L."/>
            <person name="Schwartz J.R."/>
            <person name="Shinn P."/>
            <person name="Southwick A.M."/>
            <person name="Sun H."/>
            <person name="Tallon L.J."/>
            <person name="Tambunga G."/>
            <person name="Toriumi M.J."/>
            <person name="Town C.D."/>
            <person name="Utterback T."/>
            <person name="Van Aken S."/>
            <person name="Vaysberg M."/>
            <person name="Vysotskaia V.S."/>
            <person name="Walker M."/>
            <person name="Wu D."/>
            <person name="Yu G."/>
            <person name="Fraser C.M."/>
            <person name="Venter J.C."/>
            <person name="Davis R.W."/>
        </authorList>
    </citation>
    <scope>NUCLEOTIDE SEQUENCE [LARGE SCALE GENOMIC DNA]</scope>
    <source>
        <strain>cv. Columbia</strain>
    </source>
</reference>
<reference key="2">
    <citation type="journal article" date="2017" name="Plant J.">
        <title>Araport11: a complete reannotation of the Arabidopsis thaliana reference genome.</title>
        <authorList>
            <person name="Cheng C.Y."/>
            <person name="Krishnakumar V."/>
            <person name="Chan A.P."/>
            <person name="Thibaud-Nissen F."/>
            <person name="Schobel S."/>
            <person name="Town C.D."/>
        </authorList>
    </citation>
    <scope>GENOME REANNOTATION</scope>
    <source>
        <strain>cv. Columbia</strain>
    </source>
</reference>
<protein>
    <recommendedName>
        <fullName>G-type lectin S-receptor-like serine/threonine-protein kinase At1g61390</fullName>
        <ecNumber>2.7.11.1</ecNumber>
    </recommendedName>
</protein>
<name>Y1639_ARATH</name>
<proteinExistence type="inferred from homology"/>
<organism>
    <name type="scientific">Arabidopsis thaliana</name>
    <name type="common">Mouse-ear cress</name>
    <dbReference type="NCBI Taxonomy" id="3702"/>
    <lineage>
        <taxon>Eukaryota</taxon>
        <taxon>Viridiplantae</taxon>
        <taxon>Streptophyta</taxon>
        <taxon>Embryophyta</taxon>
        <taxon>Tracheophyta</taxon>
        <taxon>Spermatophyta</taxon>
        <taxon>Magnoliopsida</taxon>
        <taxon>eudicotyledons</taxon>
        <taxon>Gunneridae</taxon>
        <taxon>Pentapetalae</taxon>
        <taxon>rosids</taxon>
        <taxon>malvids</taxon>
        <taxon>Brassicales</taxon>
        <taxon>Brassicaceae</taxon>
        <taxon>Camelineae</taxon>
        <taxon>Arabidopsis</taxon>
    </lineage>
</organism>
<dbReference type="EC" id="2.7.11.1"/>
<dbReference type="EMBL" id="AC004255">
    <property type="protein sequence ID" value="AAC13902.1"/>
    <property type="molecule type" value="Genomic_DNA"/>
</dbReference>
<dbReference type="EMBL" id="CP002684">
    <property type="protein sequence ID" value="AEE33830.1"/>
    <property type="molecule type" value="Genomic_DNA"/>
</dbReference>
<dbReference type="EMBL" id="CP002684">
    <property type="protein sequence ID" value="AEE33831.1"/>
    <property type="molecule type" value="Genomic_DNA"/>
</dbReference>
<dbReference type="PIR" id="D96639">
    <property type="entry name" value="D96639"/>
</dbReference>
<dbReference type="RefSeq" id="NP_001154439.1">
    <molecule id="O64781-2"/>
    <property type="nucleotide sequence ID" value="NM_001160967.2"/>
</dbReference>
<dbReference type="RefSeq" id="NP_176334.1">
    <molecule id="O64781-1"/>
    <property type="nucleotide sequence ID" value="NM_104820.2"/>
</dbReference>
<dbReference type="SMR" id="O64781"/>
<dbReference type="FunCoup" id="O64781">
    <property type="interactions" value="2"/>
</dbReference>
<dbReference type="STRING" id="3702.O64781"/>
<dbReference type="GlyGen" id="O64781">
    <property type="glycosylation" value="8 sites"/>
</dbReference>
<dbReference type="PaxDb" id="3702-AT1G61390.1"/>
<dbReference type="EnsemblPlants" id="AT1G61390.1">
    <molecule id="O64781-1"/>
    <property type="protein sequence ID" value="AT1G61390.1"/>
    <property type="gene ID" value="AT1G61390"/>
</dbReference>
<dbReference type="EnsemblPlants" id="AT1G61390.2">
    <molecule id="O64781-2"/>
    <property type="protein sequence ID" value="AT1G61390.2"/>
    <property type="gene ID" value="AT1G61390"/>
</dbReference>
<dbReference type="GeneID" id="842433"/>
<dbReference type="Gramene" id="AT1G61390.1">
    <molecule id="O64781-1"/>
    <property type="protein sequence ID" value="AT1G61390.1"/>
    <property type="gene ID" value="AT1G61390"/>
</dbReference>
<dbReference type="Gramene" id="AT1G61390.2">
    <molecule id="O64781-2"/>
    <property type="protein sequence ID" value="AT1G61390.2"/>
    <property type="gene ID" value="AT1G61390"/>
</dbReference>
<dbReference type="KEGG" id="ath:AT1G61390"/>
<dbReference type="Araport" id="AT1G61390"/>
<dbReference type="TAIR" id="AT1G61390"/>
<dbReference type="HOGENOM" id="CLU_000288_116_4_1"/>
<dbReference type="InParanoid" id="O64781"/>
<dbReference type="OMA" id="FMFINTS"/>
<dbReference type="PhylomeDB" id="O64781"/>
<dbReference type="PRO" id="PR:O64781"/>
<dbReference type="Proteomes" id="UP000006548">
    <property type="component" value="Chromosome 1"/>
</dbReference>
<dbReference type="ExpressionAtlas" id="O64781">
    <property type="expression patterns" value="baseline and differential"/>
</dbReference>
<dbReference type="GO" id="GO:0005886">
    <property type="term" value="C:plasma membrane"/>
    <property type="evidence" value="ECO:0007669"/>
    <property type="project" value="UniProtKB-SubCell"/>
</dbReference>
<dbReference type="GO" id="GO:0005524">
    <property type="term" value="F:ATP binding"/>
    <property type="evidence" value="ECO:0007669"/>
    <property type="project" value="UniProtKB-KW"/>
</dbReference>
<dbReference type="GO" id="GO:0005516">
    <property type="term" value="F:calmodulin binding"/>
    <property type="evidence" value="ECO:0000250"/>
    <property type="project" value="UniProtKB"/>
</dbReference>
<dbReference type="GO" id="GO:0030246">
    <property type="term" value="F:carbohydrate binding"/>
    <property type="evidence" value="ECO:0007669"/>
    <property type="project" value="UniProtKB-KW"/>
</dbReference>
<dbReference type="GO" id="GO:0106310">
    <property type="term" value="F:protein serine kinase activity"/>
    <property type="evidence" value="ECO:0007669"/>
    <property type="project" value="RHEA"/>
</dbReference>
<dbReference type="GO" id="GO:0004674">
    <property type="term" value="F:protein serine/threonine kinase activity"/>
    <property type="evidence" value="ECO:0000250"/>
    <property type="project" value="UniProtKB"/>
</dbReference>
<dbReference type="GO" id="GO:0031625">
    <property type="term" value="F:ubiquitin protein ligase binding"/>
    <property type="evidence" value="ECO:0007669"/>
    <property type="project" value="UniProtKB-ARBA"/>
</dbReference>
<dbReference type="GO" id="GO:0048544">
    <property type="term" value="P:recognition of pollen"/>
    <property type="evidence" value="ECO:0007669"/>
    <property type="project" value="InterPro"/>
</dbReference>
<dbReference type="CDD" id="cd00028">
    <property type="entry name" value="B_lectin"/>
    <property type="match status" value="1"/>
</dbReference>
<dbReference type="CDD" id="cd01098">
    <property type="entry name" value="PAN_AP_plant"/>
    <property type="match status" value="1"/>
</dbReference>
<dbReference type="CDD" id="cd14066">
    <property type="entry name" value="STKc_IRAK"/>
    <property type="match status" value="1"/>
</dbReference>
<dbReference type="FunFam" id="1.10.510.10:FF:000345">
    <property type="entry name" value="G-type lectin S-receptor-like serine/threonine-protein kinase"/>
    <property type="match status" value="1"/>
</dbReference>
<dbReference type="FunFam" id="2.90.10.10:FF:000003">
    <property type="entry name" value="G-type lectin S-receptor-like serine/threonine-protein kinase"/>
    <property type="match status" value="1"/>
</dbReference>
<dbReference type="FunFam" id="3.30.200.20:FF:000401">
    <property type="entry name" value="G-type lectin S-receptor-like serine/threonine-protein kinase SD1-29"/>
    <property type="match status" value="1"/>
</dbReference>
<dbReference type="Gene3D" id="2.90.10.10">
    <property type="entry name" value="Bulb-type lectin domain"/>
    <property type="match status" value="1"/>
</dbReference>
<dbReference type="Gene3D" id="3.30.200.20">
    <property type="entry name" value="Phosphorylase Kinase, domain 1"/>
    <property type="match status" value="1"/>
</dbReference>
<dbReference type="Gene3D" id="1.10.510.10">
    <property type="entry name" value="Transferase(Phosphotransferase) domain 1"/>
    <property type="match status" value="1"/>
</dbReference>
<dbReference type="InterPro" id="IPR001480">
    <property type="entry name" value="Bulb-type_lectin_dom"/>
</dbReference>
<dbReference type="InterPro" id="IPR036426">
    <property type="entry name" value="Bulb-type_lectin_dom_sf"/>
</dbReference>
<dbReference type="InterPro" id="IPR011009">
    <property type="entry name" value="Kinase-like_dom_sf"/>
</dbReference>
<dbReference type="InterPro" id="IPR003609">
    <property type="entry name" value="Pan_app"/>
</dbReference>
<dbReference type="InterPro" id="IPR000719">
    <property type="entry name" value="Prot_kinase_dom"/>
</dbReference>
<dbReference type="InterPro" id="IPR021820">
    <property type="entry name" value="S-locus_recpt_kinase_C"/>
</dbReference>
<dbReference type="InterPro" id="IPR000858">
    <property type="entry name" value="S_locus_glycoprot_dom"/>
</dbReference>
<dbReference type="InterPro" id="IPR001245">
    <property type="entry name" value="Ser-Thr/Tyr_kinase_cat_dom"/>
</dbReference>
<dbReference type="InterPro" id="IPR008271">
    <property type="entry name" value="Ser/Thr_kinase_AS"/>
</dbReference>
<dbReference type="InterPro" id="IPR024171">
    <property type="entry name" value="SRK-like_kinase"/>
</dbReference>
<dbReference type="PANTHER" id="PTHR27002:SF724">
    <property type="entry name" value="PROTEIN KINASE DOMAIN-CONTAINING PROTEIN"/>
    <property type="match status" value="1"/>
</dbReference>
<dbReference type="PANTHER" id="PTHR27002">
    <property type="entry name" value="RECEPTOR-LIKE SERINE/THREONINE-PROTEIN KINASE SD1-8"/>
    <property type="match status" value="1"/>
</dbReference>
<dbReference type="Pfam" id="PF01453">
    <property type="entry name" value="B_lectin"/>
    <property type="match status" value="1"/>
</dbReference>
<dbReference type="Pfam" id="PF11883">
    <property type="entry name" value="DUF3403"/>
    <property type="match status" value="1"/>
</dbReference>
<dbReference type="Pfam" id="PF08276">
    <property type="entry name" value="PAN_2"/>
    <property type="match status" value="1"/>
</dbReference>
<dbReference type="Pfam" id="PF07714">
    <property type="entry name" value="PK_Tyr_Ser-Thr"/>
    <property type="match status" value="1"/>
</dbReference>
<dbReference type="Pfam" id="PF00954">
    <property type="entry name" value="S_locus_glycop"/>
    <property type="match status" value="1"/>
</dbReference>
<dbReference type="PIRSF" id="PIRSF000641">
    <property type="entry name" value="SRK"/>
    <property type="match status" value="1"/>
</dbReference>
<dbReference type="SMART" id="SM00108">
    <property type="entry name" value="B_lectin"/>
    <property type="match status" value="1"/>
</dbReference>
<dbReference type="SMART" id="SM00473">
    <property type="entry name" value="PAN_AP"/>
    <property type="match status" value="1"/>
</dbReference>
<dbReference type="SMART" id="SM00220">
    <property type="entry name" value="S_TKc"/>
    <property type="match status" value="1"/>
</dbReference>
<dbReference type="SUPFAM" id="SSF51110">
    <property type="entry name" value="alpha-D-mannose-specific plant lectins"/>
    <property type="match status" value="1"/>
</dbReference>
<dbReference type="SUPFAM" id="SSF56112">
    <property type="entry name" value="Protein kinase-like (PK-like)"/>
    <property type="match status" value="1"/>
</dbReference>
<dbReference type="PROSITE" id="PS50927">
    <property type="entry name" value="BULB_LECTIN"/>
    <property type="match status" value="1"/>
</dbReference>
<dbReference type="PROSITE" id="PS50948">
    <property type="entry name" value="PAN"/>
    <property type="match status" value="1"/>
</dbReference>
<dbReference type="PROSITE" id="PS50011">
    <property type="entry name" value="PROTEIN_KINASE_DOM"/>
    <property type="match status" value="1"/>
</dbReference>
<dbReference type="PROSITE" id="PS00108">
    <property type="entry name" value="PROTEIN_KINASE_ST"/>
    <property type="match status" value="1"/>
</dbReference>
<evidence type="ECO:0000250" key="1"/>
<evidence type="ECO:0000250" key="2">
    <source>
        <dbReference type="UniProtKB" id="Q9LPZ9"/>
    </source>
</evidence>
<evidence type="ECO:0000255" key="3"/>
<evidence type="ECO:0000255" key="4">
    <source>
        <dbReference type="PROSITE-ProRule" id="PRU00038"/>
    </source>
</evidence>
<evidence type="ECO:0000255" key="5">
    <source>
        <dbReference type="PROSITE-ProRule" id="PRU00159"/>
    </source>
</evidence>
<evidence type="ECO:0000255" key="6">
    <source>
        <dbReference type="PROSITE-ProRule" id="PRU00315"/>
    </source>
</evidence>
<evidence type="ECO:0000255" key="7">
    <source>
        <dbReference type="PROSITE-ProRule" id="PRU10027"/>
    </source>
</evidence>
<evidence type="ECO:0000305" key="8"/>